<evidence type="ECO:0000250" key="1"/>
<evidence type="ECO:0000250" key="2">
    <source>
        <dbReference type="UniProtKB" id="O60885"/>
    </source>
</evidence>
<evidence type="ECO:0000255" key="3">
    <source>
        <dbReference type="PROSITE-ProRule" id="PRU00035"/>
    </source>
</evidence>
<evidence type="ECO:0000255" key="4">
    <source>
        <dbReference type="PROSITE-ProRule" id="PRU00857"/>
    </source>
</evidence>
<evidence type="ECO:0000256" key="5">
    <source>
        <dbReference type="SAM" id="MobiDB-lite"/>
    </source>
</evidence>
<evidence type="ECO:0000269" key="6">
    <source>
    </source>
</evidence>
<evidence type="ECO:0000305" key="7"/>
<protein>
    <recommendedName>
        <fullName>Bromodomain-containing protein 4</fullName>
    </recommendedName>
</protein>
<feature type="chain" id="PRO_0000423294" description="Bromodomain-containing protein 4">
    <location>
        <begin position="1"/>
        <end position="1444"/>
    </location>
</feature>
<feature type="domain" description="Bromo 1" evidence="3">
    <location>
        <begin position="43"/>
        <end position="149"/>
    </location>
</feature>
<feature type="domain" description="Bromo 2" evidence="3">
    <location>
        <begin position="358"/>
        <end position="467"/>
    </location>
</feature>
<feature type="domain" description="NET" evidence="4">
    <location>
        <begin position="633"/>
        <end position="730"/>
    </location>
</feature>
<feature type="region of interest" description="Disordered" evidence="5">
    <location>
        <begin position="1"/>
        <end position="44"/>
    </location>
</feature>
<feature type="region of interest" description="Disordered" evidence="5">
    <location>
        <begin position="154"/>
        <end position="217"/>
    </location>
</feature>
<feature type="region of interest" description="Disordered" evidence="5">
    <location>
        <begin position="279"/>
        <end position="362"/>
    </location>
</feature>
<feature type="region of interest" description="Disordered" evidence="5">
    <location>
        <begin position="492"/>
        <end position="523"/>
    </location>
</feature>
<feature type="region of interest" description="NPS region" evidence="1">
    <location>
        <begin position="498"/>
        <end position="517"/>
    </location>
</feature>
<feature type="region of interest" description="BID region" evidence="1">
    <location>
        <begin position="538"/>
        <end position="610"/>
    </location>
</feature>
<feature type="region of interest" description="Disordered" evidence="5">
    <location>
        <begin position="540"/>
        <end position="645"/>
    </location>
</feature>
<feature type="region of interest" description="Disordered" evidence="5">
    <location>
        <begin position="722"/>
        <end position="986"/>
    </location>
</feature>
<feature type="region of interest" description="Disordered" evidence="5">
    <location>
        <begin position="1020"/>
        <end position="1422"/>
    </location>
</feature>
<feature type="region of interest" description="C-terminal (CTD) region" evidence="1">
    <location>
        <begin position="1126"/>
        <end position="1444"/>
    </location>
</feature>
<feature type="compositionally biased region" description="Low complexity" evidence="5">
    <location>
        <begin position="11"/>
        <end position="27"/>
    </location>
</feature>
<feature type="compositionally biased region" description="Polar residues" evidence="5">
    <location>
        <begin position="186"/>
        <end position="196"/>
    </location>
</feature>
<feature type="compositionally biased region" description="Pro residues" evidence="5">
    <location>
        <begin position="206"/>
        <end position="216"/>
    </location>
</feature>
<feature type="compositionally biased region" description="Polar residues" evidence="5">
    <location>
        <begin position="303"/>
        <end position="319"/>
    </location>
</feature>
<feature type="compositionally biased region" description="Basic and acidic residues" evidence="5">
    <location>
        <begin position="327"/>
        <end position="347"/>
    </location>
</feature>
<feature type="compositionally biased region" description="Low complexity" evidence="5">
    <location>
        <begin position="498"/>
        <end position="511"/>
    </location>
</feature>
<feature type="compositionally biased region" description="Basic residues" evidence="5">
    <location>
        <begin position="549"/>
        <end position="569"/>
    </location>
</feature>
<feature type="compositionally biased region" description="Low complexity" evidence="5">
    <location>
        <begin position="746"/>
        <end position="760"/>
    </location>
</feature>
<feature type="compositionally biased region" description="Low complexity" evidence="5">
    <location>
        <begin position="800"/>
        <end position="823"/>
    </location>
</feature>
<feature type="compositionally biased region" description="Low complexity" evidence="5">
    <location>
        <begin position="919"/>
        <end position="954"/>
    </location>
</feature>
<feature type="compositionally biased region" description="Low complexity" evidence="5">
    <location>
        <begin position="1036"/>
        <end position="1046"/>
    </location>
</feature>
<feature type="compositionally biased region" description="Polar residues" evidence="5">
    <location>
        <begin position="1090"/>
        <end position="1109"/>
    </location>
</feature>
<feature type="compositionally biased region" description="Low complexity" evidence="5">
    <location>
        <begin position="1110"/>
        <end position="1121"/>
    </location>
</feature>
<feature type="compositionally biased region" description="Polar residues" evidence="5">
    <location>
        <begin position="1151"/>
        <end position="1163"/>
    </location>
</feature>
<feature type="compositionally biased region" description="Basic and acidic residues" evidence="5">
    <location>
        <begin position="1246"/>
        <end position="1255"/>
    </location>
</feature>
<feature type="compositionally biased region" description="Low complexity" evidence="5">
    <location>
        <begin position="1282"/>
        <end position="1296"/>
    </location>
</feature>
<feature type="compositionally biased region" description="Basic and acidic residues" evidence="5">
    <location>
        <begin position="1298"/>
        <end position="1357"/>
    </location>
</feature>
<feature type="compositionally biased region" description="Low complexity" evidence="5">
    <location>
        <begin position="1367"/>
        <end position="1389"/>
    </location>
</feature>
<feature type="compositionally biased region" description="Basic and acidic residues" evidence="5">
    <location>
        <begin position="1405"/>
        <end position="1422"/>
    </location>
</feature>
<feature type="site" description="Acetylated histone binding" evidence="2">
    <location>
        <position position="125"/>
    </location>
</feature>
<feature type="site" description="Acetylated histone binding" evidence="2">
    <location>
        <position position="443"/>
    </location>
</feature>
<feature type="sequence conflict" description="In Ref. 1; ABW97742." evidence="7" ref="1">
    <original>M</original>
    <variation>K</variation>
    <location>
        <position position="1001"/>
    </location>
</feature>
<feature type="sequence conflict" description="In Ref. 1; ABW97742." evidence="7" ref="1">
    <original>N</original>
    <variation>H</variation>
    <location>
        <position position="1013"/>
    </location>
</feature>
<organism>
    <name type="scientific">Danio rerio</name>
    <name type="common">Zebrafish</name>
    <name type="synonym">Brachydanio rerio</name>
    <dbReference type="NCBI Taxonomy" id="7955"/>
    <lineage>
        <taxon>Eukaryota</taxon>
        <taxon>Metazoa</taxon>
        <taxon>Chordata</taxon>
        <taxon>Craniata</taxon>
        <taxon>Vertebrata</taxon>
        <taxon>Euteleostomi</taxon>
        <taxon>Actinopterygii</taxon>
        <taxon>Neopterygii</taxon>
        <taxon>Teleostei</taxon>
        <taxon>Ostariophysi</taxon>
        <taxon>Cypriniformes</taxon>
        <taxon>Danionidae</taxon>
        <taxon>Danioninae</taxon>
        <taxon>Danio</taxon>
    </lineage>
</organism>
<accession>F1R5H6</accession>
<accession>A8WE74</accession>
<keyword id="KW-0103">Bromodomain</keyword>
<keyword id="KW-0156">Chromatin regulator</keyword>
<keyword id="KW-0158">Chromosome</keyword>
<keyword id="KW-0539">Nucleus</keyword>
<keyword id="KW-1185">Reference proteome</keyword>
<keyword id="KW-0677">Repeat</keyword>
<keyword id="KW-0804">Transcription</keyword>
<keyword id="KW-0805">Transcription regulation</keyword>
<comment type="function">
    <text evidence="2">Chromatin reader protein that recognizes and binds acetylated histones and plays a key role in transmission of epigenetic memory across cell divisions and transcription regulation. Remains associated with acetylated chromatin throughout the entire cell cycle and provides epigenetic memory for postmitotic G1 gene transcription by preserving acetylated chromatin status and maintaining high-order chromatin structure. During interphase, plays a key role in regulating the transcription of signal-inducible genes by associating with the P-TEFb complex and recruiting it to promoters (By similarity).</text>
</comment>
<comment type="subcellular location">
    <subcellularLocation>
        <location evidence="6">Nucleus</location>
    </subcellularLocation>
    <subcellularLocation>
        <location evidence="6">Chromosome</location>
    </subcellularLocation>
    <text>Associates with acetylated chromatin.</text>
</comment>
<comment type="tissue specificity">
    <text evidence="6">Widely expressed.</text>
</comment>
<comment type="developmental stage">
    <text evidence="6">Detected at all stages tested, including the fertilized egg stage (at protein level). Present in the fertilized egg before mid-blastula transition, and is expressed ubiquitously at relatively high levels from gastrulation to mid-somitogenesis stages. At the 20-somite stage, expression starts to decrease in the notochord, but remains high in the head and central nervous system. This expression pattern persists until approximately 24 hours post-fertilization (hpf). At 48 hpf, expression is dramatically reduced in the posterior part of the body, and becomes restricted to the head area.</text>
</comment>
<comment type="domain">
    <text evidence="2">The 2 bromo domains mediate specific binding to acetylated histones. The exact combination of modified histone tails required to recruit brd4 to target genes is still unclear. The first bromo domain has high affinity for acetylated histone H4 tail, whereas the second bromo domain recognizes multiply acetylated marks in histone H3 (By similarity).</text>
</comment>
<comment type="similarity">
    <text evidence="7">Belongs to the BET family.</text>
</comment>
<reference key="1">
    <citation type="journal article" date="2008" name="Dev. Dyn.">
        <title>Brd4 associates with mitotic chromosomes throughout early zebrafish embryogenesis.</title>
        <authorList>
            <person name="Toyama R."/>
            <person name="Rebbert M.L."/>
            <person name="Dey A."/>
            <person name="Ozato K."/>
            <person name="Dawid I.B."/>
        </authorList>
    </citation>
    <scope>NUCLEOTIDE SEQUENCE [MRNA]</scope>
    <scope>TISSUE SPECIFICITY</scope>
    <scope>DEVELOPMENTAL STAGE</scope>
    <scope>SUBCELLULAR LOCATION</scope>
</reference>
<reference key="2">
    <citation type="journal article" date="2013" name="Nature">
        <title>The zebrafish reference genome sequence and its relationship to the human genome.</title>
        <authorList>
            <person name="Howe K."/>
            <person name="Clark M.D."/>
            <person name="Torroja C.F."/>
            <person name="Torrance J."/>
            <person name="Berthelot C."/>
            <person name="Muffato M."/>
            <person name="Collins J.E."/>
            <person name="Humphray S."/>
            <person name="McLaren K."/>
            <person name="Matthews L."/>
            <person name="McLaren S."/>
            <person name="Sealy I."/>
            <person name="Caccamo M."/>
            <person name="Churcher C."/>
            <person name="Scott C."/>
            <person name="Barrett J.C."/>
            <person name="Koch R."/>
            <person name="Rauch G.J."/>
            <person name="White S."/>
            <person name="Chow W."/>
            <person name="Kilian B."/>
            <person name="Quintais L.T."/>
            <person name="Guerra-Assuncao J.A."/>
            <person name="Zhou Y."/>
            <person name="Gu Y."/>
            <person name="Yen J."/>
            <person name="Vogel J.H."/>
            <person name="Eyre T."/>
            <person name="Redmond S."/>
            <person name="Banerjee R."/>
            <person name="Chi J."/>
            <person name="Fu B."/>
            <person name="Langley E."/>
            <person name="Maguire S.F."/>
            <person name="Laird G.K."/>
            <person name="Lloyd D."/>
            <person name="Kenyon E."/>
            <person name="Donaldson S."/>
            <person name="Sehra H."/>
            <person name="Almeida-King J."/>
            <person name="Loveland J."/>
            <person name="Trevanion S."/>
            <person name="Jones M."/>
            <person name="Quail M."/>
            <person name="Willey D."/>
            <person name="Hunt A."/>
            <person name="Burton J."/>
            <person name="Sims S."/>
            <person name="McLay K."/>
            <person name="Plumb B."/>
            <person name="Davis J."/>
            <person name="Clee C."/>
            <person name="Oliver K."/>
            <person name="Clark R."/>
            <person name="Riddle C."/>
            <person name="Elliot D."/>
            <person name="Threadgold G."/>
            <person name="Harden G."/>
            <person name="Ware D."/>
            <person name="Begum S."/>
            <person name="Mortimore B."/>
            <person name="Kerry G."/>
            <person name="Heath P."/>
            <person name="Phillimore B."/>
            <person name="Tracey A."/>
            <person name="Corby N."/>
            <person name="Dunn M."/>
            <person name="Johnson C."/>
            <person name="Wood J."/>
            <person name="Clark S."/>
            <person name="Pelan S."/>
            <person name="Griffiths G."/>
            <person name="Smith M."/>
            <person name="Glithero R."/>
            <person name="Howden P."/>
            <person name="Barker N."/>
            <person name="Lloyd C."/>
            <person name="Stevens C."/>
            <person name="Harley J."/>
            <person name="Holt K."/>
            <person name="Panagiotidis G."/>
            <person name="Lovell J."/>
            <person name="Beasley H."/>
            <person name="Henderson C."/>
            <person name="Gordon D."/>
            <person name="Auger K."/>
            <person name="Wright D."/>
            <person name="Collins J."/>
            <person name="Raisen C."/>
            <person name="Dyer L."/>
            <person name="Leung K."/>
            <person name="Robertson L."/>
            <person name="Ambridge K."/>
            <person name="Leongamornlert D."/>
            <person name="McGuire S."/>
            <person name="Gilderthorp R."/>
            <person name="Griffiths C."/>
            <person name="Manthravadi D."/>
            <person name="Nichol S."/>
            <person name="Barker G."/>
            <person name="Whitehead S."/>
            <person name="Kay M."/>
            <person name="Brown J."/>
            <person name="Murnane C."/>
            <person name="Gray E."/>
            <person name="Humphries M."/>
            <person name="Sycamore N."/>
            <person name="Barker D."/>
            <person name="Saunders D."/>
            <person name="Wallis J."/>
            <person name="Babbage A."/>
            <person name="Hammond S."/>
            <person name="Mashreghi-Mohammadi M."/>
            <person name="Barr L."/>
            <person name="Martin S."/>
            <person name="Wray P."/>
            <person name="Ellington A."/>
            <person name="Matthews N."/>
            <person name="Ellwood M."/>
            <person name="Woodmansey R."/>
            <person name="Clark G."/>
            <person name="Cooper J."/>
            <person name="Tromans A."/>
            <person name="Grafham D."/>
            <person name="Skuce C."/>
            <person name="Pandian R."/>
            <person name="Andrews R."/>
            <person name="Harrison E."/>
            <person name="Kimberley A."/>
            <person name="Garnett J."/>
            <person name="Fosker N."/>
            <person name="Hall R."/>
            <person name="Garner P."/>
            <person name="Kelly D."/>
            <person name="Bird C."/>
            <person name="Palmer S."/>
            <person name="Gehring I."/>
            <person name="Berger A."/>
            <person name="Dooley C.M."/>
            <person name="Ersan-Urun Z."/>
            <person name="Eser C."/>
            <person name="Geiger H."/>
            <person name="Geisler M."/>
            <person name="Karotki L."/>
            <person name="Kirn A."/>
            <person name="Konantz J."/>
            <person name="Konantz M."/>
            <person name="Oberlander M."/>
            <person name="Rudolph-Geiger S."/>
            <person name="Teucke M."/>
            <person name="Lanz C."/>
            <person name="Raddatz G."/>
            <person name="Osoegawa K."/>
            <person name="Zhu B."/>
            <person name="Rapp A."/>
            <person name="Widaa S."/>
            <person name="Langford C."/>
            <person name="Yang F."/>
            <person name="Schuster S.C."/>
            <person name="Carter N.P."/>
            <person name="Harrow J."/>
            <person name="Ning Z."/>
            <person name="Herrero J."/>
            <person name="Searle S.M."/>
            <person name="Enright A."/>
            <person name="Geisler R."/>
            <person name="Plasterk R.H."/>
            <person name="Lee C."/>
            <person name="Westerfield M."/>
            <person name="de Jong P.J."/>
            <person name="Zon L.I."/>
            <person name="Postlethwait J.H."/>
            <person name="Nusslein-Volhard C."/>
            <person name="Hubbard T.J."/>
            <person name="Roest Crollius H."/>
            <person name="Rogers J."/>
            <person name="Stemple D.L."/>
        </authorList>
    </citation>
    <scope>NUCLEOTIDE SEQUENCE [LARGE SCALE GENOMIC DNA]</scope>
    <source>
        <strain>Tuebingen</strain>
    </source>
</reference>
<sequence length="1444" mass="159675">MGDGLDAVQMSGSSSSQGQPSSQAPSSFNPNPPETSNPTRPKRQTNQLQYLLKVVLKSLWKHQFAWPFHAPVDAVKLNLPDYYKIIKNPMDMGTIKKRLESAFYTSAQECIQDFNTMFTNCYIYNKPGDDIVLMAEALEKVFLTKISEMPQQEVEISTTAGKGRGRGRRDPDMNMKVGPVLEPLTASPQTRGLSNLTPGPQTRGPPQGPPTLPPQPIVQIQALPPRVPPSLPTIPLHAPQLGPPFSLGPTDCNPPAPIITAVPPPTQTALPPVHIQQSAAPPILQTPISIPNKRKSQKRKADTTTPTANDQLNESSPAESKSGKTLPRRDNTRPSKLPKKEAPDSQHHWTAAPGTPSPKQQEQLRYCSGIVKDMFAKKHAAYAWPFYKPVDVDTLGLHDYHDIIKHPMDLSTIKDKLETRQYREAQEFAADVRLMFSNCYKYNPPDHEVVAMARKLQDVFEMRFAKMPDEPEEMLAPAPAPVLHPAPVKTQPVMATASSSDTSSDSSSESESSTDDSEEERAQRLAELQEQLKAVHEQLAALSQPQASKPKKKEKEKKEKKKDKHKKKAGVMPALEEILEPPPALKPQGKPKNKDPLPKKSKKLSKKEGGKSNRSMAPPGAAPPTLQPVPGLDTEEDLGLTGGAAMAGMAAGEKCKPMSYEEKRQLSLDINKLPGDKLGRVVHIIQSREPSLKNSNPDEIEIDFETLKPSTLRELERYVSSCLRKKKKPAVPEKSMEAISAVKTKGTSSDSGSSSESSSSESEDSETGMASKPKKRGRGEGKKAHHQTTAPGMPLPQVPLQPQTPALQPSIQLKQQQPQHPSPAAYMPPPVTALEPSQLLENPFDPLAHFMHLPHHANDSSSPAPPHLNAHPPGGPVSPETHPFLNQHPILPSPALHNALPQQPSRPSNRAAPLPPKPLQQSTSQQQPPPQQTLVPPQQLQPQQQQPAPPQQQHLPHHPLHAPQQMRPRPLSPPTLTPQGLLSSQPPQMLLEDDEEPVPSMSLPMYLQHLQPNRLQATPTSLMQSLQSRPQPPGQPSLLQSVQVQSHLPPPQLPVQTQVQPQQPAPHQPSPQLSQHQARHMQQLGFPQGPLQTAQTQPGQHKVSMPSTKAQQIIQQQQATQHHSPRQHKADSYNSAHLRDNPSPLMMHSPQIPQYSLVHQSPSQDKKEPQRGPSALGGIKEEKLPPSPVMRGEPFSPAMRPESHKHPDSKPTMPGHSQQRADMKPLEMSRPVIRSSEQSGPPPSMQDKEKFKQEPKTPSAPKKVQDVKFKNMGSWASLAQKSSTTPSSGLKSSSDSFEQFRRAAREKEEREKALKAQVEQAEKDRLRKEQEKLRGRDEEDSIEPPRRPLEEPRRRQEPQQVQPPPQQHQTQAQAQTLNPAQSPSASQPTQAPPQSPASSQSALDQQREMARRREQERRRREAMAATIDMNFQSDLMAIFEENLF</sequence>
<name>BRD4_DANRE</name>
<dbReference type="EMBL" id="EU236152">
    <property type="protein sequence ID" value="ABW97742.1"/>
    <property type="molecule type" value="mRNA"/>
</dbReference>
<dbReference type="EMBL" id="AL954361">
    <property type="status" value="NOT_ANNOTATED_CDS"/>
    <property type="molecule type" value="Genomic_DNA"/>
</dbReference>
<dbReference type="RefSeq" id="NP_001104751.2">
    <property type="nucleotide sequence ID" value="NM_001111281.2"/>
</dbReference>
<dbReference type="SMR" id="F1R5H6"/>
<dbReference type="FunCoup" id="F1R5H6">
    <property type="interactions" value="1901"/>
</dbReference>
<dbReference type="STRING" id="7955.ENSDARP00000101616"/>
<dbReference type="PaxDb" id="7955-ENSDARP00000101616"/>
<dbReference type="Ensembl" id="ENSDART00000115117">
    <property type="protein sequence ID" value="ENSDARP00000101616"/>
    <property type="gene ID" value="ENSDARG00000078904"/>
</dbReference>
<dbReference type="GeneID" id="570531"/>
<dbReference type="KEGG" id="dre:570531"/>
<dbReference type="AGR" id="ZFIN:ZDB-GENE-030131-267"/>
<dbReference type="CTD" id="23476"/>
<dbReference type="ZFIN" id="ZDB-GENE-030131-267">
    <property type="gene designation" value="brd4"/>
</dbReference>
<dbReference type="eggNOG" id="KOG1474">
    <property type="taxonomic scope" value="Eukaryota"/>
</dbReference>
<dbReference type="HOGENOM" id="CLU_001499_0_3_1"/>
<dbReference type="InParanoid" id="F1R5H6"/>
<dbReference type="OrthoDB" id="21449at2759"/>
<dbReference type="TreeFam" id="TF317345"/>
<dbReference type="PRO" id="PR:F1R5H6"/>
<dbReference type="Proteomes" id="UP000000437">
    <property type="component" value="Chromosome 3"/>
</dbReference>
<dbReference type="Bgee" id="ENSDARG00000078904">
    <property type="expression patterns" value="Expressed in early embryo and 28 other cell types or tissues"/>
</dbReference>
<dbReference type="ExpressionAtlas" id="F1R5H6">
    <property type="expression patterns" value="baseline and differential"/>
</dbReference>
<dbReference type="GO" id="GO:0000785">
    <property type="term" value="C:chromatin"/>
    <property type="evidence" value="ECO:0000318"/>
    <property type="project" value="GO_Central"/>
</dbReference>
<dbReference type="GO" id="GO:0000793">
    <property type="term" value="C:condensed chromosome"/>
    <property type="evidence" value="ECO:0000314"/>
    <property type="project" value="ZFIN"/>
</dbReference>
<dbReference type="GO" id="GO:0005634">
    <property type="term" value="C:nucleus"/>
    <property type="evidence" value="ECO:0000314"/>
    <property type="project" value="ZFIN"/>
</dbReference>
<dbReference type="GO" id="GO:0042393">
    <property type="term" value="F:histone binding"/>
    <property type="evidence" value="ECO:0000314"/>
    <property type="project" value="ZFIN"/>
</dbReference>
<dbReference type="GO" id="GO:0070577">
    <property type="term" value="F:lysine-acetylated histone binding"/>
    <property type="evidence" value="ECO:0000318"/>
    <property type="project" value="GO_Central"/>
</dbReference>
<dbReference type="GO" id="GO:0002039">
    <property type="term" value="F:p53 binding"/>
    <property type="evidence" value="ECO:0000250"/>
    <property type="project" value="UniProtKB"/>
</dbReference>
<dbReference type="GO" id="GO:0006338">
    <property type="term" value="P:chromatin remodeling"/>
    <property type="evidence" value="ECO:0000318"/>
    <property type="project" value="GO_Central"/>
</dbReference>
<dbReference type="GO" id="GO:0043123">
    <property type="term" value="P:positive regulation of canonical NF-kappaB signal transduction"/>
    <property type="evidence" value="ECO:0000250"/>
    <property type="project" value="UniProtKB"/>
</dbReference>
<dbReference type="GO" id="GO:2000330">
    <property type="term" value="P:positive regulation of T-helper 17 cell lineage commitment"/>
    <property type="evidence" value="ECO:0000250"/>
    <property type="project" value="UniProtKB"/>
</dbReference>
<dbReference type="GO" id="GO:0045944">
    <property type="term" value="P:positive regulation of transcription by RNA polymerase II"/>
    <property type="evidence" value="ECO:0000250"/>
    <property type="project" value="UniProtKB"/>
</dbReference>
<dbReference type="GO" id="GO:0032968">
    <property type="term" value="P:positive regulation of transcription elongation by RNA polymerase II"/>
    <property type="evidence" value="ECO:0000250"/>
    <property type="project" value="UniProtKB"/>
</dbReference>
<dbReference type="GO" id="GO:0006355">
    <property type="term" value="P:regulation of DNA-templated transcription"/>
    <property type="evidence" value="ECO:0000318"/>
    <property type="project" value="GO_Central"/>
</dbReference>
<dbReference type="GO" id="GO:0050727">
    <property type="term" value="P:regulation of inflammatory response"/>
    <property type="evidence" value="ECO:0000250"/>
    <property type="project" value="UniProtKB"/>
</dbReference>
<dbReference type="GO" id="GO:0002574">
    <property type="term" value="P:thrombocyte differentiation"/>
    <property type="evidence" value="ECO:0000315"/>
    <property type="project" value="ZFIN"/>
</dbReference>
<dbReference type="CDD" id="cd05497">
    <property type="entry name" value="Bromo_Brdt_I_like"/>
    <property type="match status" value="1"/>
</dbReference>
<dbReference type="CDD" id="cd05498">
    <property type="entry name" value="Bromo_Brdt_II_like"/>
    <property type="match status" value="1"/>
</dbReference>
<dbReference type="FunFam" id="1.20.920.10:FF:000003">
    <property type="entry name" value="Bromodomain-containing protein 2"/>
    <property type="match status" value="1"/>
</dbReference>
<dbReference type="FunFam" id="1.20.1270.220:FF:000001">
    <property type="entry name" value="bromodomain-containing protein 2 isoform X1"/>
    <property type="match status" value="1"/>
</dbReference>
<dbReference type="FunFam" id="1.20.920.10:FF:000002">
    <property type="entry name" value="Bromodomain-containing protein 4"/>
    <property type="match status" value="1"/>
</dbReference>
<dbReference type="Gene3D" id="1.20.1270.220">
    <property type="match status" value="1"/>
</dbReference>
<dbReference type="Gene3D" id="1.20.920.10">
    <property type="entry name" value="Bromodomain-like"/>
    <property type="match status" value="2"/>
</dbReference>
<dbReference type="InterPro" id="IPR031354">
    <property type="entry name" value="BRD4_CDT"/>
</dbReference>
<dbReference type="InterPro" id="IPR043508">
    <property type="entry name" value="Bromo_Brdt_I"/>
</dbReference>
<dbReference type="InterPro" id="IPR043509">
    <property type="entry name" value="Bromo_Brdt_II"/>
</dbReference>
<dbReference type="InterPro" id="IPR050935">
    <property type="entry name" value="Bromo_chromatin_reader"/>
</dbReference>
<dbReference type="InterPro" id="IPR001487">
    <property type="entry name" value="Bromodomain"/>
</dbReference>
<dbReference type="InterPro" id="IPR036427">
    <property type="entry name" value="Bromodomain-like_sf"/>
</dbReference>
<dbReference type="InterPro" id="IPR018359">
    <property type="entry name" value="Bromodomain_CS"/>
</dbReference>
<dbReference type="InterPro" id="IPR027353">
    <property type="entry name" value="NET_dom"/>
</dbReference>
<dbReference type="InterPro" id="IPR038336">
    <property type="entry name" value="NET_sf"/>
</dbReference>
<dbReference type="PANTHER" id="PTHR22880:SF245">
    <property type="entry name" value="BROMODOMAIN-CONTAINING PROTEIN 4"/>
    <property type="match status" value="1"/>
</dbReference>
<dbReference type="PANTHER" id="PTHR22880">
    <property type="entry name" value="FALZ-RELATED BROMODOMAIN-CONTAINING PROTEINS"/>
    <property type="match status" value="1"/>
</dbReference>
<dbReference type="Pfam" id="PF17035">
    <property type="entry name" value="BET"/>
    <property type="match status" value="1"/>
</dbReference>
<dbReference type="Pfam" id="PF17105">
    <property type="entry name" value="BRD4_CDT"/>
    <property type="match status" value="1"/>
</dbReference>
<dbReference type="Pfam" id="PF00439">
    <property type="entry name" value="Bromodomain"/>
    <property type="match status" value="2"/>
</dbReference>
<dbReference type="PRINTS" id="PR00503">
    <property type="entry name" value="BROMODOMAIN"/>
</dbReference>
<dbReference type="SMART" id="SM00297">
    <property type="entry name" value="BROMO"/>
    <property type="match status" value="2"/>
</dbReference>
<dbReference type="SUPFAM" id="SSF47370">
    <property type="entry name" value="Bromodomain"/>
    <property type="match status" value="2"/>
</dbReference>
<dbReference type="PROSITE" id="PS00633">
    <property type="entry name" value="BROMODOMAIN_1"/>
    <property type="match status" value="2"/>
</dbReference>
<dbReference type="PROSITE" id="PS50014">
    <property type="entry name" value="BROMODOMAIN_2"/>
    <property type="match status" value="2"/>
</dbReference>
<dbReference type="PROSITE" id="PS51525">
    <property type="entry name" value="NET"/>
    <property type="match status" value="1"/>
</dbReference>
<gene>
    <name type="primary">brd4</name>
</gene>
<proteinExistence type="evidence at protein level"/>